<comment type="function">
    <text evidence="1">IGPS catalyzes the conversion of PRFAR and glutamine to IGP, AICAR and glutamate. The HisF subunit catalyzes the cyclization activity that produces IGP and AICAR from PRFAR using the ammonia provided by the HisH subunit.</text>
</comment>
<comment type="catalytic activity">
    <reaction evidence="1">
        <text>5-[(5-phospho-1-deoxy-D-ribulos-1-ylimino)methylamino]-1-(5-phospho-beta-D-ribosyl)imidazole-4-carboxamide + L-glutamine = D-erythro-1-(imidazol-4-yl)glycerol 3-phosphate + 5-amino-1-(5-phospho-beta-D-ribosyl)imidazole-4-carboxamide + L-glutamate + H(+)</text>
        <dbReference type="Rhea" id="RHEA:24793"/>
        <dbReference type="ChEBI" id="CHEBI:15378"/>
        <dbReference type="ChEBI" id="CHEBI:29985"/>
        <dbReference type="ChEBI" id="CHEBI:58278"/>
        <dbReference type="ChEBI" id="CHEBI:58359"/>
        <dbReference type="ChEBI" id="CHEBI:58475"/>
        <dbReference type="ChEBI" id="CHEBI:58525"/>
        <dbReference type="EC" id="4.3.2.10"/>
    </reaction>
</comment>
<comment type="pathway">
    <text evidence="1">Amino-acid biosynthesis; L-histidine biosynthesis; L-histidine from 5-phospho-alpha-D-ribose 1-diphosphate: step 5/9.</text>
</comment>
<comment type="subunit">
    <text evidence="1">Heterodimer of HisH and HisF.</text>
</comment>
<comment type="subcellular location">
    <subcellularLocation>
        <location evidence="1">Cytoplasm</location>
    </subcellularLocation>
</comment>
<comment type="similarity">
    <text evidence="1">Belongs to the HisA/HisF family.</text>
</comment>
<accession>Q47QS3</accession>
<feature type="chain" id="PRO_0000142252" description="Imidazole glycerol phosphate synthase subunit HisF">
    <location>
        <begin position="1"/>
        <end position="256"/>
    </location>
</feature>
<feature type="active site" evidence="1">
    <location>
        <position position="12"/>
    </location>
</feature>
<feature type="active site" evidence="1">
    <location>
        <position position="131"/>
    </location>
</feature>
<keyword id="KW-0028">Amino-acid biosynthesis</keyword>
<keyword id="KW-0963">Cytoplasm</keyword>
<keyword id="KW-0368">Histidine biosynthesis</keyword>
<keyword id="KW-0456">Lyase</keyword>
<protein>
    <recommendedName>
        <fullName evidence="1">Imidazole glycerol phosphate synthase subunit HisF</fullName>
        <ecNumber evidence="1">4.3.2.10</ecNumber>
    </recommendedName>
    <alternativeName>
        <fullName evidence="1">IGP synthase cyclase subunit</fullName>
    </alternativeName>
    <alternativeName>
        <fullName evidence="1">IGP synthase subunit HisF</fullName>
    </alternativeName>
    <alternativeName>
        <fullName evidence="1">ImGP synthase subunit HisF</fullName>
        <shortName evidence="1">IGPS subunit HisF</shortName>
    </alternativeName>
</protein>
<sequence>MSLAVRVIPCLDVDGGRVVKGVNFQNLRDAGDPVELARRYDAEGADELTFLDVTASSSNRETTYDVVRRTAEQVFIPLTVGGGVRSTEDVDRLLRAGADKVSINTAAVRRPELIREIAQEFGSQVLVLSADVRRTVNGTATPSGFEITTHGGRQGTGIDAVEWVQQAEELGAGEILLNSMDADGTKSGFDLELIRAVRKAVNVPLIASGGAGAVEHFAPAVDAGANAVLAASVFHFGEITISDVKAELRAKGYPVR</sequence>
<dbReference type="EC" id="4.3.2.10" evidence="1"/>
<dbReference type="EMBL" id="CP000088">
    <property type="protein sequence ID" value="AAZ55194.1"/>
    <property type="molecule type" value="Genomic_DNA"/>
</dbReference>
<dbReference type="RefSeq" id="WP_011291603.1">
    <property type="nucleotide sequence ID" value="NC_007333.1"/>
</dbReference>
<dbReference type="SMR" id="Q47QS3"/>
<dbReference type="STRING" id="269800.Tfu_1156"/>
<dbReference type="KEGG" id="tfu:Tfu_1156"/>
<dbReference type="eggNOG" id="COG0107">
    <property type="taxonomic scope" value="Bacteria"/>
</dbReference>
<dbReference type="HOGENOM" id="CLU_048577_4_0_11"/>
<dbReference type="OrthoDB" id="9781903at2"/>
<dbReference type="UniPathway" id="UPA00031">
    <property type="reaction ID" value="UER00010"/>
</dbReference>
<dbReference type="GO" id="GO:0005737">
    <property type="term" value="C:cytoplasm"/>
    <property type="evidence" value="ECO:0007669"/>
    <property type="project" value="UniProtKB-SubCell"/>
</dbReference>
<dbReference type="GO" id="GO:0000107">
    <property type="term" value="F:imidazoleglycerol-phosphate synthase activity"/>
    <property type="evidence" value="ECO:0007669"/>
    <property type="project" value="UniProtKB-UniRule"/>
</dbReference>
<dbReference type="GO" id="GO:0016829">
    <property type="term" value="F:lyase activity"/>
    <property type="evidence" value="ECO:0007669"/>
    <property type="project" value="UniProtKB-KW"/>
</dbReference>
<dbReference type="GO" id="GO:0000105">
    <property type="term" value="P:L-histidine biosynthetic process"/>
    <property type="evidence" value="ECO:0007669"/>
    <property type="project" value="UniProtKB-UniRule"/>
</dbReference>
<dbReference type="CDD" id="cd04731">
    <property type="entry name" value="HisF"/>
    <property type="match status" value="1"/>
</dbReference>
<dbReference type="FunFam" id="3.20.20.70:FF:000006">
    <property type="entry name" value="Imidazole glycerol phosphate synthase subunit HisF"/>
    <property type="match status" value="1"/>
</dbReference>
<dbReference type="Gene3D" id="3.20.20.70">
    <property type="entry name" value="Aldolase class I"/>
    <property type="match status" value="1"/>
</dbReference>
<dbReference type="HAMAP" id="MF_01013">
    <property type="entry name" value="HisF"/>
    <property type="match status" value="1"/>
</dbReference>
<dbReference type="InterPro" id="IPR013785">
    <property type="entry name" value="Aldolase_TIM"/>
</dbReference>
<dbReference type="InterPro" id="IPR006062">
    <property type="entry name" value="His_biosynth"/>
</dbReference>
<dbReference type="InterPro" id="IPR004651">
    <property type="entry name" value="HisF"/>
</dbReference>
<dbReference type="InterPro" id="IPR050064">
    <property type="entry name" value="IGPS_HisA/HisF"/>
</dbReference>
<dbReference type="InterPro" id="IPR011060">
    <property type="entry name" value="RibuloseP-bd_barrel"/>
</dbReference>
<dbReference type="NCBIfam" id="TIGR00735">
    <property type="entry name" value="hisF"/>
    <property type="match status" value="1"/>
</dbReference>
<dbReference type="PANTHER" id="PTHR21235:SF2">
    <property type="entry name" value="IMIDAZOLE GLYCEROL PHOSPHATE SYNTHASE HISHF"/>
    <property type="match status" value="1"/>
</dbReference>
<dbReference type="PANTHER" id="PTHR21235">
    <property type="entry name" value="IMIDAZOLE GLYCEROL PHOSPHATE SYNTHASE SUBUNIT HISF/H IGP SYNTHASE SUBUNIT HISF/H"/>
    <property type="match status" value="1"/>
</dbReference>
<dbReference type="Pfam" id="PF00977">
    <property type="entry name" value="His_biosynth"/>
    <property type="match status" value="1"/>
</dbReference>
<dbReference type="SUPFAM" id="SSF51366">
    <property type="entry name" value="Ribulose-phoshate binding barrel"/>
    <property type="match status" value="1"/>
</dbReference>
<evidence type="ECO:0000255" key="1">
    <source>
        <dbReference type="HAMAP-Rule" id="MF_01013"/>
    </source>
</evidence>
<organism>
    <name type="scientific">Thermobifida fusca (strain YX)</name>
    <dbReference type="NCBI Taxonomy" id="269800"/>
    <lineage>
        <taxon>Bacteria</taxon>
        <taxon>Bacillati</taxon>
        <taxon>Actinomycetota</taxon>
        <taxon>Actinomycetes</taxon>
        <taxon>Streptosporangiales</taxon>
        <taxon>Nocardiopsidaceae</taxon>
        <taxon>Thermobifida</taxon>
    </lineage>
</organism>
<reference key="1">
    <citation type="journal article" date="2007" name="J. Bacteriol.">
        <title>Genome sequence and analysis of the soil cellulolytic actinomycete Thermobifida fusca YX.</title>
        <authorList>
            <person name="Lykidis A."/>
            <person name="Mavromatis K."/>
            <person name="Ivanova N."/>
            <person name="Anderson I."/>
            <person name="Land M."/>
            <person name="DiBartolo G."/>
            <person name="Martinez M."/>
            <person name="Lapidus A."/>
            <person name="Lucas S."/>
            <person name="Copeland A."/>
            <person name="Richardson P."/>
            <person name="Wilson D.B."/>
            <person name="Kyrpides N."/>
        </authorList>
    </citation>
    <scope>NUCLEOTIDE SEQUENCE [LARGE SCALE GENOMIC DNA]</scope>
    <source>
        <strain>YX</strain>
    </source>
</reference>
<name>HIS6_THEFY</name>
<gene>
    <name evidence="1" type="primary">hisF</name>
    <name type="ordered locus">Tfu_1156</name>
</gene>
<proteinExistence type="inferred from homology"/>